<feature type="chain" id="PRO_0000258307" description="Phosphopentomutase">
    <location>
        <begin position="1"/>
        <end position="392"/>
    </location>
</feature>
<feature type="binding site" evidence="1">
    <location>
        <position position="14"/>
    </location>
    <ligand>
        <name>Mn(2+)</name>
        <dbReference type="ChEBI" id="CHEBI:29035"/>
        <label>1</label>
    </ligand>
</feature>
<feature type="binding site" evidence="1">
    <location>
        <position position="286"/>
    </location>
    <ligand>
        <name>Mn(2+)</name>
        <dbReference type="ChEBI" id="CHEBI:29035"/>
        <label>2</label>
    </ligand>
</feature>
<feature type="binding site" evidence="1">
    <location>
        <position position="291"/>
    </location>
    <ligand>
        <name>Mn(2+)</name>
        <dbReference type="ChEBI" id="CHEBI:29035"/>
        <label>2</label>
    </ligand>
</feature>
<feature type="binding site" evidence="1">
    <location>
        <position position="327"/>
    </location>
    <ligand>
        <name>Mn(2+)</name>
        <dbReference type="ChEBI" id="CHEBI:29035"/>
        <label>1</label>
    </ligand>
</feature>
<feature type="binding site" evidence="1">
    <location>
        <position position="328"/>
    </location>
    <ligand>
        <name>Mn(2+)</name>
        <dbReference type="ChEBI" id="CHEBI:29035"/>
        <label>1</label>
    </ligand>
</feature>
<feature type="binding site" evidence="1">
    <location>
        <position position="339"/>
    </location>
    <ligand>
        <name>Mn(2+)</name>
        <dbReference type="ChEBI" id="CHEBI:29035"/>
        <label>2</label>
    </ligand>
</feature>
<name>DEOB_STAAB</name>
<protein>
    <recommendedName>
        <fullName evidence="1">Phosphopentomutase</fullName>
        <ecNumber evidence="1">5.4.2.7</ecNumber>
    </recommendedName>
    <alternativeName>
        <fullName evidence="1">Phosphodeoxyribomutase</fullName>
    </alternativeName>
</protein>
<keyword id="KW-0963">Cytoplasm</keyword>
<keyword id="KW-0413">Isomerase</keyword>
<keyword id="KW-0464">Manganese</keyword>
<keyword id="KW-0479">Metal-binding</keyword>
<gene>
    <name evidence="1" type="primary">deoB</name>
    <name type="ordered locus">SAB0078</name>
</gene>
<sequence length="392" mass="43796">MTRPFNRVHLIVMDSVGIGEAPDAADFKDEGSHTLRHTLEGFDQTLPNLEKLGLGNIDKLPVVNAVEQPEAYYTKLSEASVGKDTMTGHWEIMGLNIMQPFKVYPNGFPEELIQQIEEMTGRKVVANKPASGTQIIDEWGEHQMKTGDLIVYTSADPVLQIAAHEDIIPLEELYDICEKVRELTKDPKYLIGRIIARPYVGEPGNFTRTSNRHDYALKPFGKTVLDHLKDGGYDVIAIGKINDIYDGEGVTEAVRTKSNMDGMDQLMKIVKKDFTGISFLNLVDFDALYGHRRDKPGYAQAIKDFDDRLPELFSNLKEDDLVIITADHGNDPTAPGTDHTREYIPVIMYSPKFKGGHALESDTTFSSIGATIADNFNVTLPEFGKSYLKELK</sequence>
<dbReference type="EC" id="5.4.2.7" evidence="1"/>
<dbReference type="EMBL" id="AJ938182">
    <property type="protein sequence ID" value="CAI79766.1"/>
    <property type="molecule type" value="Genomic_DNA"/>
</dbReference>
<dbReference type="RefSeq" id="WP_000197806.1">
    <property type="nucleotide sequence ID" value="NC_007622.1"/>
</dbReference>
<dbReference type="SMR" id="Q2YUU3"/>
<dbReference type="KEGG" id="sab:SAB0078"/>
<dbReference type="HOGENOM" id="CLU_053861_0_0_9"/>
<dbReference type="UniPathway" id="UPA00002">
    <property type="reaction ID" value="UER00467"/>
</dbReference>
<dbReference type="GO" id="GO:0005829">
    <property type="term" value="C:cytosol"/>
    <property type="evidence" value="ECO:0007669"/>
    <property type="project" value="TreeGrafter"/>
</dbReference>
<dbReference type="GO" id="GO:0000287">
    <property type="term" value="F:magnesium ion binding"/>
    <property type="evidence" value="ECO:0007669"/>
    <property type="project" value="InterPro"/>
</dbReference>
<dbReference type="GO" id="GO:0030145">
    <property type="term" value="F:manganese ion binding"/>
    <property type="evidence" value="ECO:0007669"/>
    <property type="project" value="UniProtKB-UniRule"/>
</dbReference>
<dbReference type="GO" id="GO:0008973">
    <property type="term" value="F:phosphopentomutase activity"/>
    <property type="evidence" value="ECO:0007669"/>
    <property type="project" value="UniProtKB-UniRule"/>
</dbReference>
<dbReference type="GO" id="GO:0006018">
    <property type="term" value="P:2-deoxyribose 1-phosphate catabolic process"/>
    <property type="evidence" value="ECO:0007669"/>
    <property type="project" value="UniProtKB-UniRule"/>
</dbReference>
<dbReference type="GO" id="GO:0006015">
    <property type="term" value="P:5-phosphoribose 1-diphosphate biosynthetic process"/>
    <property type="evidence" value="ECO:0007669"/>
    <property type="project" value="UniProtKB-UniPathway"/>
</dbReference>
<dbReference type="GO" id="GO:0043094">
    <property type="term" value="P:metabolic compound salvage"/>
    <property type="evidence" value="ECO:0007669"/>
    <property type="project" value="InterPro"/>
</dbReference>
<dbReference type="GO" id="GO:0009117">
    <property type="term" value="P:nucleotide metabolic process"/>
    <property type="evidence" value="ECO:0007669"/>
    <property type="project" value="InterPro"/>
</dbReference>
<dbReference type="CDD" id="cd16009">
    <property type="entry name" value="PPM"/>
    <property type="match status" value="1"/>
</dbReference>
<dbReference type="FunFam" id="3.30.70.1250:FF:000001">
    <property type="entry name" value="Phosphopentomutase"/>
    <property type="match status" value="1"/>
</dbReference>
<dbReference type="Gene3D" id="3.40.720.10">
    <property type="entry name" value="Alkaline Phosphatase, subunit A"/>
    <property type="match status" value="1"/>
</dbReference>
<dbReference type="Gene3D" id="3.30.70.1250">
    <property type="entry name" value="Phosphopentomutase"/>
    <property type="match status" value="1"/>
</dbReference>
<dbReference type="HAMAP" id="MF_00740">
    <property type="entry name" value="Phosphopentomut"/>
    <property type="match status" value="1"/>
</dbReference>
<dbReference type="InterPro" id="IPR017850">
    <property type="entry name" value="Alkaline_phosphatase_core_sf"/>
</dbReference>
<dbReference type="InterPro" id="IPR010045">
    <property type="entry name" value="DeoB"/>
</dbReference>
<dbReference type="InterPro" id="IPR006124">
    <property type="entry name" value="Metalloenzyme"/>
</dbReference>
<dbReference type="InterPro" id="IPR024052">
    <property type="entry name" value="Phosphopentomutase_DeoB_cap_sf"/>
</dbReference>
<dbReference type="NCBIfam" id="TIGR01696">
    <property type="entry name" value="deoB"/>
    <property type="match status" value="1"/>
</dbReference>
<dbReference type="NCBIfam" id="NF003766">
    <property type="entry name" value="PRK05362.1"/>
    <property type="match status" value="1"/>
</dbReference>
<dbReference type="PANTHER" id="PTHR21110">
    <property type="entry name" value="PHOSPHOPENTOMUTASE"/>
    <property type="match status" value="1"/>
</dbReference>
<dbReference type="PANTHER" id="PTHR21110:SF0">
    <property type="entry name" value="PHOSPHOPENTOMUTASE"/>
    <property type="match status" value="1"/>
</dbReference>
<dbReference type="Pfam" id="PF01676">
    <property type="entry name" value="Metalloenzyme"/>
    <property type="match status" value="1"/>
</dbReference>
<dbReference type="PIRSF" id="PIRSF001491">
    <property type="entry name" value="Ppentomutase"/>
    <property type="match status" value="1"/>
</dbReference>
<dbReference type="SUPFAM" id="SSF53649">
    <property type="entry name" value="Alkaline phosphatase-like"/>
    <property type="match status" value="1"/>
</dbReference>
<dbReference type="SUPFAM" id="SSF143856">
    <property type="entry name" value="DeoB insert domain-like"/>
    <property type="match status" value="1"/>
</dbReference>
<accession>Q2YUU3</accession>
<proteinExistence type="inferred from homology"/>
<reference key="1">
    <citation type="journal article" date="2007" name="PLoS ONE">
        <title>Molecular correlates of host specialization in Staphylococcus aureus.</title>
        <authorList>
            <person name="Herron-Olson L."/>
            <person name="Fitzgerald J.R."/>
            <person name="Musser J.M."/>
            <person name="Kapur V."/>
        </authorList>
    </citation>
    <scope>NUCLEOTIDE SEQUENCE [LARGE SCALE GENOMIC DNA]</scope>
    <source>
        <strain>bovine RF122 / ET3-1</strain>
    </source>
</reference>
<evidence type="ECO:0000255" key="1">
    <source>
        <dbReference type="HAMAP-Rule" id="MF_00740"/>
    </source>
</evidence>
<comment type="function">
    <text evidence="1">Isomerase that catalyzes the conversion of deoxy-ribose 1-phosphate (dRib-1-P) and ribose 1-phosphate (Rib-1-P) to deoxy-ribose 5-phosphate (dRib-5-P) and ribose 5-phosphate (Rib-5-P), respectively.</text>
</comment>
<comment type="catalytic activity">
    <reaction evidence="1">
        <text>2-deoxy-alpha-D-ribose 1-phosphate = 2-deoxy-D-ribose 5-phosphate</text>
        <dbReference type="Rhea" id="RHEA:27658"/>
        <dbReference type="ChEBI" id="CHEBI:57259"/>
        <dbReference type="ChEBI" id="CHEBI:62877"/>
        <dbReference type="EC" id="5.4.2.7"/>
    </reaction>
</comment>
<comment type="catalytic activity">
    <reaction evidence="1">
        <text>alpha-D-ribose 1-phosphate = D-ribose 5-phosphate</text>
        <dbReference type="Rhea" id="RHEA:18793"/>
        <dbReference type="ChEBI" id="CHEBI:57720"/>
        <dbReference type="ChEBI" id="CHEBI:78346"/>
        <dbReference type="EC" id="5.4.2.7"/>
    </reaction>
</comment>
<comment type="cofactor">
    <cofactor evidence="1">
        <name>Mn(2+)</name>
        <dbReference type="ChEBI" id="CHEBI:29035"/>
    </cofactor>
    <text evidence="1">Binds 2 manganese ions.</text>
</comment>
<comment type="pathway">
    <text evidence="1">Carbohydrate degradation; 2-deoxy-D-ribose 1-phosphate degradation; D-glyceraldehyde 3-phosphate and acetaldehyde from 2-deoxy-alpha-D-ribose 1-phosphate: step 1/2.</text>
</comment>
<comment type="subcellular location">
    <subcellularLocation>
        <location evidence="1">Cytoplasm</location>
    </subcellularLocation>
</comment>
<comment type="similarity">
    <text evidence="1">Belongs to the phosphopentomutase family.</text>
</comment>
<organism>
    <name type="scientific">Staphylococcus aureus (strain bovine RF122 / ET3-1)</name>
    <dbReference type="NCBI Taxonomy" id="273036"/>
    <lineage>
        <taxon>Bacteria</taxon>
        <taxon>Bacillati</taxon>
        <taxon>Bacillota</taxon>
        <taxon>Bacilli</taxon>
        <taxon>Bacillales</taxon>
        <taxon>Staphylococcaceae</taxon>
        <taxon>Staphylococcus</taxon>
    </lineage>
</organism>